<evidence type="ECO:0000250" key="1"/>
<evidence type="ECO:0000305" key="2"/>
<evidence type="ECO:0007829" key="3">
    <source>
        <dbReference type="PDB" id="2OMD"/>
    </source>
</evidence>
<name>MOAE_AQUAE</name>
<protein>
    <recommendedName>
        <fullName>Molybdopterin synthase catalytic subunit</fullName>
        <ecNumber>2.8.1.12</ecNumber>
    </recommendedName>
    <alternativeName>
        <fullName>MPT synthase subunit 2</fullName>
    </alternativeName>
    <alternativeName>
        <fullName>Molybdenum cofactor biosynthesis protein E</fullName>
    </alternativeName>
    <alternativeName>
        <fullName>Molybdopterin-converting factor large subunit</fullName>
    </alternativeName>
    <alternativeName>
        <fullName>Molybdopterin-converting factor subunit 2</fullName>
    </alternativeName>
</protein>
<feature type="chain" id="PRO_0000163076" description="Molybdopterin synthase catalytic subunit">
    <location>
        <begin position="1"/>
        <end position="154"/>
    </location>
</feature>
<feature type="binding site" evidence="1">
    <location>
        <begin position="40"/>
        <end position="42"/>
    </location>
    <ligand>
        <name>substrate</name>
    </ligand>
</feature>
<feature type="binding site" evidence="1">
    <location>
        <begin position="107"/>
        <end position="108"/>
    </location>
    <ligand>
        <name>substrate</name>
    </ligand>
</feature>
<feature type="binding site" evidence="1">
    <location>
        <position position="123"/>
    </location>
    <ligand>
        <name>substrate</name>
    </ligand>
</feature>
<feature type="binding site" evidence="1">
    <location>
        <begin position="130"/>
        <end position="132"/>
    </location>
    <ligand>
        <name>substrate</name>
    </ligand>
</feature>
<feature type="strand" evidence="3">
    <location>
        <begin position="8"/>
        <end position="14"/>
    </location>
</feature>
<feature type="helix" evidence="3">
    <location>
        <begin position="18"/>
        <end position="24"/>
    </location>
</feature>
<feature type="strand" evidence="3">
    <location>
        <begin position="33"/>
        <end position="39"/>
    </location>
</feature>
<feature type="helix" evidence="3">
    <location>
        <begin position="45"/>
        <end position="47"/>
    </location>
</feature>
<feature type="strand" evidence="3">
    <location>
        <begin position="51"/>
        <end position="58"/>
    </location>
</feature>
<feature type="helix" evidence="3">
    <location>
        <begin position="60"/>
        <end position="78"/>
    </location>
</feature>
<feature type="strand" evidence="3">
    <location>
        <begin position="81"/>
        <end position="88"/>
    </location>
</feature>
<feature type="strand" evidence="3">
    <location>
        <begin position="90"/>
        <end position="93"/>
    </location>
</feature>
<feature type="strand" evidence="3">
    <location>
        <begin position="99"/>
        <end position="107"/>
    </location>
</feature>
<feature type="helix" evidence="3">
    <location>
        <begin position="108"/>
        <end position="125"/>
    </location>
</feature>
<feature type="strand" evidence="3">
    <location>
        <begin position="128"/>
        <end position="134"/>
    </location>
</feature>
<feature type="helix" evidence="3">
    <location>
        <begin position="138"/>
        <end position="140"/>
    </location>
</feature>
<comment type="function">
    <text evidence="1">Converts molybdopterin precursor Z into molybdopterin. This requires the incorporation of two sulfur atoms into precursor Z to generate a dithiolene group. The sulfur is provided by MoaD (By similarity).</text>
</comment>
<comment type="catalytic activity">
    <reaction>
        <text>2 [molybdopterin-synthase sulfur-carrier protein]-C-terminal-Gly-aminoethanethioate + cyclic pyranopterin phosphate + H2O = molybdopterin + 2 [molybdopterin-synthase sulfur-carrier protein]-C-terminal Gly-Gly + 2 H(+)</text>
        <dbReference type="Rhea" id="RHEA:26333"/>
        <dbReference type="Rhea" id="RHEA-COMP:12202"/>
        <dbReference type="Rhea" id="RHEA-COMP:19907"/>
        <dbReference type="ChEBI" id="CHEBI:15377"/>
        <dbReference type="ChEBI" id="CHEBI:15378"/>
        <dbReference type="ChEBI" id="CHEBI:58698"/>
        <dbReference type="ChEBI" id="CHEBI:59648"/>
        <dbReference type="ChEBI" id="CHEBI:90778"/>
        <dbReference type="ChEBI" id="CHEBI:232372"/>
        <dbReference type="EC" id="2.8.1.12"/>
    </reaction>
</comment>
<comment type="pathway">
    <text>Cofactor biosynthesis; molybdopterin biosynthesis.</text>
</comment>
<comment type="subunit">
    <text evidence="1">Heterotetramer of 2 MoaD subunits and 2 MoaE subunits. Also stable as homodimer. The enzyme changes between these two forms during catalysis (By similarity).</text>
</comment>
<comment type="similarity">
    <text evidence="2">Belongs to the MoaE family.</text>
</comment>
<proteinExistence type="evidence at protein level"/>
<keyword id="KW-0002">3D-structure</keyword>
<keyword id="KW-0501">Molybdenum cofactor biosynthesis</keyword>
<keyword id="KW-1185">Reference proteome</keyword>
<keyword id="KW-0808">Transferase</keyword>
<sequence>MEVGMIPRVYLGHEWFGAERILSEYQVPEDCGAQVLFLGIPRNAPEDGGNIEALEYEAYPEMAIKEMEKIRQETIEKFGVKEVFIHHRLGLVKIGEPSFLVLAVGGHREETFKACRYAVDETKKRVPIWKKEIFKEGKGEWVLGEKKNASGQTK</sequence>
<organism>
    <name type="scientific">Aquifex aeolicus (strain VF5)</name>
    <dbReference type="NCBI Taxonomy" id="224324"/>
    <lineage>
        <taxon>Bacteria</taxon>
        <taxon>Pseudomonadati</taxon>
        <taxon>Aquificota</taxon>
        <taxon>Aquificia</taxon>
        <taxon>Aquificales</taxon>
        <taxon>Aquificaceae</taxon>
        <taxon>Aquifex</taxon>
    </lineage>
</organism>
<reference key="1">
    <citation type="journal article" date="1998" name="Nature">
        <title>The complete genome of the hyperthermophilic bacterium Aquifex aeolicus.</title>
        <authorList>
            <person name="Deckert G."/>
            <person name="Warren P.V."/>
            <person name="Gaasterland T."/>
            <person name="Young W.G."/>
            <person name="Lenox A.L."/>
            <person name="Graham D.E."/>
            <person name="Overbeek R."/>
            <person name="Snead M.A."/>
            <person name="Keller M."/>
            <person name="Aujay M."/>
            <person name="Huber R."/>
            <person name="Feldman R.A."/>
            <person name="Short J.M."/>
            <person name="Olsen G.J."/>
            <person name="Swanson R.V."/>
        </authorList>
    </citation>
    <scope>NUCLEOTIDE SEQUENCE [LARGE SCALE GENOMIC DNA]</scope>
    <source>
        <strain>VF5</strain>
    </source>
</reference>
<reference key="2">
    <citation type="submission" date="2009-02" db="PDB data bank">
        <title>Crystal structure of molybdopterin converting factor subunit 2 (aq_2181) from Aquifex aeolicus VF5.</title>
        <authorList>
            <consortium name="RIKEN structural genomics initiative (RSGI)"/>
        </authorList>
    </citation>
    <scope>X-RAY CRYSTALLOGRAPHY (2.0 ANGSTROMS)</scope>
</reference>
<dbReference type="EC" id="2.8.1.12"/>
<dbReference type="EMBL" id="AE000657">
    <property type="protein sequence ID" value="AAC07878.1"/>
    <property type="molecule type" value="Genomic_DNA"/>
</dbReference>
<dbReference type="PIR" id="D70487">
    <property type="entry name" value="D70487"/>
</dbReference>
<dbReference type="RefSeq" id="NP_214497.1">
    <property type="nucleotide sequence ID" value="NC_000918.1"/>
</dbReference>
<dbReference type="PDB" id="2OMD">
    <property type="method" value="X-ray"/>
    <property type="resolution" value="2.00 A"/>
    <property type="chains" value="A/B=1-154"/>
</dbReference>
<dbReference type="PDBsum" id="2OMD"/>
<dbReference type="SMR" id="O67928"/>
<dbReference type="FunCoup" id="O67928">
    <property type="interactions" value="407"/>
</dbReference>
<dbReference type="STRING" id="224324.aq_2181"/>
<dbReference type="EnsemblBacteria" id="AAC07878">
    <property type="protein sequence ID" value="AAC07878"/>
    <property type="gene ID" value="aq_2181"/>
</dbReference>
<dbReference type="KEGG" id="aae:aq_2181"/>
<dbReference type="PATRIC" id="fig|224324.8.peg.1687"/>
<dbReference type="eggNOG" id="COG0314">
    <property type="taxonomic scope" value="Bacteria"/>
</dbReference>
<dbReference type="HOGENOM" id="CLU_089568_1_2_0"/>
<dbReference type="InParanoid" id="O67928"/>
<dbReference type="OrthoDB" id="9803224at2"/>
<dbReference type="UniPathway" id="UPA00344"/>
<dbReference type="EvolutionaryTrace" id="O67928"/>
<dbReference type="Proteomes" id="UP000000798">
    <property type="component" value="Chromosome"/>
</dbReference>
<dbReference type="GO" id="GO:0005829">
    <property type="term" value="C:cytosol"/>
    <property type="evidence" value="ECO:0000318"/>
    <property type="project" value="GO_Central"/>
</dbReference>
<dbReference type="GO" id="GO:0030366">
    <property type="term" value="F:molybdopterin synthase activity"/>
    <property type="evidence" value="ECO:0007669"/>
    <property type="project" value="UniProtKB-EC"/>
</dbReference>
<dbReference type="GO" id="GO:0006777">
    <property type="term" value="P:Mo-molybdopterin cofactor biosynthetic process"/>
    <property type="evidence" value="ECO:0007669"/>
    <property type="project" value="UniProtKB-KW"/>
</dbReference>
<dbReference type="CDD" id="cd00756">
    <property type="entry name" value="MoaE"/>
    <property type="match status" value="1"/>
</dbReference>
<dbReference type="FunFam" id="3.90.1170.40:FF:000004">
    <property type="entry name" value="Molybdopterin biosynthesis protein MoeE"/>
    <property type="match status" value="1"/>
</dbReference>
<dbReference type="Gene3D" id="3.90.1170.40">
    <property type="entry name" value="Molybdopterin biosynthesis MoaE subunit"/>
    <property type="match status" value="1"/>
</dbReference>
<dbReference type="InterPro" id="IPR036563">
    <property type="entry name" value="MoaE_sf"/>
</dbReference>
<dbReference type="InterPro" id="IPR003448">
    <property type="entry name" value="Mopterin_biosynth_MoaE"/>
</dbReference>
<dbReference type="PANTHER" id="PTHR23404">
    <property type="entry name" value="MOLYBDOPTERIN SYNTHASE RELATED"/>
    <property type="match status" value="1"/>
</dbReference>
<dbReference type="Pfam" id="PF02391">
    <property type="entry name" value="MoaE"/>
    <property type="match status" value="1"/>
</dbReference>
<dbReference type="SUPFAM" id="SSF54690">
    <property type="entry name" value="Molybdopterin synthase subunit MoaE"/>
    <property type="match status" value="1"/>
</dbReference>
<accession>O67928</accession>
<gene>
    <name type="primary">moaE</name>
    <name type="ordered locus">aq_2181</name>
</gene>